<sequence>MVRTPCCKEEGIKKGAWTPEEDQKLIAYLHLHGEGGWRTLPEKAGLKRCGKSCRLRWANYLRPDIKRGEFSPEEDDTIIKLHALKGNKWAAIATSLAGRTDNEIKNYWNTNLKKRLKQKGIDAITHKPINSTGQTGFEPKVNKPVYSSGSARLLNRVASKYAVELNRDLLTGIISGNSTVAEDSQNSGDVDSPTSTLLNKMAATSVLINTTTTYSGFSDNCSFTDEFNEFFNNEEISDIYTTVDNFGFMEELKSILSYGDASAGVIENSPEVNVADAMEFIDSWNEDDNMVGVFV</sequence>
<keyword id="KW-0010">Activator</keyword>
<keyword id="KW-0238">DNA-binding</keyword>
<keyword id="KW-0539">Nucleus</keyword>
<keyword id="KW-1185">Reference proteome</keyword>
<keyword id="KW-0677">Repeat</keyword>
<keyword id="KW-0804">Transcription</keyword>
<keyword id="KW-0805">Transcription regulation</keyword>
<evidence type="ECO:0000255" key="1">
    <source>
        <dbReference type="PROSITE-ProRule" id="PRU00625"/>
    </source>
</evidence>
<evidence type="ECO:0000269" key="2">
    <source>
    </source>
</evidence>
<evidence type="ECO:0000269" key="3">
    <source>
    </source>
</evidence>
<evidence type="ECO:0000269" key="4">
    <source>
    </source>
</evidence>
<evidence type="ECO:0000269" key="5">
    <source>
    </source>
</evidence>
<evidence type="ECO:0000269" key="6">
    <source>
    </source>
</evidence>
<evidence type="ECO:0000305" key="7"/>
<dbReference type="EMBL" id="U66462">
    <property type="protein sequence ID" value="AAC16897.1"/>
    <property type="molecule type" value="Genomic_DNA"/>
</dbReference>
<dbReference type="EMBL" id="AY519642">
    <property type="protein sequence ID" value="AAS10112.1"/>
    <property type="molecule type" value="mRNA"/>
</dbReference>
<dbReference type="EMBL" id="AB008269">
    <property type="protein sequence ID" value="BAB10639.1"/>
    <property type="molecule type" value="Genomic_DNA"/>
</dbReference>
<dbReference type="EMBL" id="CP002688">
    <property type="protein sequence ID" value="AED97393.1"/>
    <property type="molecule type" value="Genomic_DNA"/>
</dbReference>
<dbReference type="EMBL" id="BT030326">
    <property type="protein sequence ID" value="ABO09889.1"/>
    <property type="molecule type" value="mRNA"/>
</dbReference>
<dbReference type="EMBL" id="AF062876">
    <property type="protein sequence ID" value="AAC83598.1"/>
    <property type="molecule type" value="mRNA"/>
</dbReference>
<dbReference type="PIR" id="T51648">
    <property type="entry name" value="T51648"/>
</dbReference>
<dbReference type="RefSeq" id="NP_200897.1">
    <property type="nucleotide sequence ID" value="NM_125482.3"/>
</dbReference>
<dbReference type="SMR" id="O64399"/>
<dbReference type="BioGRID" id="21454">
    <property type="interactions" value="5"/>
</dbReference>
<dbReference type="IntAct" id="O64399">
    <property type="interactions" value="2"/>
</dbReference>
<dbReference type="STRING" id="3702.O64399"/>
<dbReference type="PaxDb" id="3702-AT5G60890.1"/>
<dbReference type="EnsemblPlants" id="AT5G60890.1">
    <property type="protein sequence ID" value="AT5G60890.1"/>
    <property type="gene ID" value="AT5G60890"/>
</dbReference>
<dbReference type="GeneID" id="836210"/>
<dbReference type="Gramene" id="AT5G60890.1">
    <property type="protein sequence ID" value="AT5G60890.1"/>
    <property type="gene ID" value="AT5G60890"/>
</dbReference>
<dbReference type="KEGG" id="ath:AT5G60890"/>
<dbReference type="Araport" id="AT5G60890"/>
<dbReference type="TAIR" id="AT5G60890">
    <property type="gene designation" value="MYB34"/>
</dbReference>
<dbReference type="eggNOG" id="KOG0048">
    <property type="taxonomic scope" value="Eukaryota"/>
</dbReference>
<dbReference type="HOGENOM" id="CLU_028567_6_1_1"/>
<dbReference type="InParanoid" id="O64399"/>
<dbReference type="OMA" id="ANSVMIK"/>
<dbReference type="PhylomeDB" id="O64399"/>
<dbReference type="PRO" id="PR:O64399"/>
<dbReference type="Proteomes" id="UP000006548">
    <property type="component" value="Chromosome 5"/>
</dbReference>
<dbReference type="ExpressionAtlas" id="O64399">
    <property type="expression patterns" value="baseline and differential"/>
</dbReference>
<dbReference type="GO" id="GO:0005634">
    <property type="term" value="C:nucleus"/>
    <property type="evidence" value="ECO:0007005"/>
    <property type="project" value="TAIR"/>
</dbReference>
<dbReference type="GO" id="GO:0003700">
    <property type="term" value="F:DNA-binding transcription factor activity"/>
    <property type="evidence" value="ECO:0000250"/>
    <property type="project" value="TAIR"/>
</dbReference>
<dbReference type="GO" id="GO:0000976">
    <property type="term" value="F:transcription cis-regulatory region binding"/>
    <property type="evidence" value="ECO:0000353"/>
    <property type="project" value="TAIR"/>
</dbReference>
<dbReference type="GO" id="GO:0010438">
    <property type="term" value="P:cellular response to sulfur starvation"/>
    <property type="evidence" value="ECO:0000304"/>
    <property type="project" value="TAIR"/>
</dbReference>
<dbReference type="GO" id="GO:0002213">
    <property type="term" value="P:defense response to insect"/>
    <property type="evidence" value="ECO:0000315"/>
    <property type="project" value="TAIR"/>
</dbReference>
<dbReference type="GO" id="GO:0009759">
    <property type="term" value="P:indole glucosinolate biosynthetic process"/>
    <property type="evidence" value="ECO:0000315"/>
    <property type="project" value="TAIR"/>
</dbReference>
<dbReference type="GO" id="GO:0000162">
    <property type="term" value="P:L-tryptophan biosynthetic process"/>
    <property type="evidence" value="ECO:0000315"/>
    <property type="project" value="TAIR"/>
</dbReference>
<dbReference type="GO" id="GO:0045893">
    <property type="term" value="P:positive regulation of DNA-templated transcription"/>
    <property type="evidence" value="ECO:0000315"/>
    <property type="project" value="TAIR"/>
</dbReference>
<dbReference type="CDD" id="cd00167">
    <property type="entry name" value="SANT"/>
    <property type="match status" value="2"/>
</dbReference>
<dbReference type="FunFam" id="1.10.10.60:FF:000394">
    <property type="entry name" value="MYB transcription factor"/>
    <property type="match status" value="1"/>
</dbReference>
<dbReference type="FunFam" id="1.10.10.60:FF:000001">
    <property type="entry name" value="MYB-related transcription factor"/>
    <property type="match status" value="1"/>
</dbReference>
<dbReference type="Gene3D" id="1.10.10.60">
    <property type="entry name" value="Homeodomain-like"/>
    <property type="match status" value="2"/>
</dbReference>
<dbReference type="InterPro" id="IPR009057">
    <property type="entry name" value="Homeodomain-like_sf"/>
</dbReference>
<dbReference type="InterPro" id="IPR017930">
    <property type="entry name" value="Myb_dom"/>
</dbReference>
<dbReference type="InterPro" id="IPR015495">
    <property type="entry name" value="Myb_TF_plants"/>
</dbReference>
<dbReference type="InterPro" id="IPR001005">
    <property type="entry name" value="SANT/Myb"/>
</dbReference>
<dbReference type="PANTHER" id="PTHR47994">
    <property type="entry name" value="F14D16.11-RELATED"/>
    <property type="match status" value="1"/>
</dbReference>
<dbReference type="PANTHER" id="PTHR47994:SF5">
    <property type="entry name" value="F14D16.11-RELATED"/>
    <property type="match status" value="1"/>
</dbReference>
<dbReference type="Pfam" id="PF00249">
    <property type="entry name" value="Myb_DNA-binding"/>
    <property type="match status" value="2"/>
</dbReference>
<dbReference type="SMART" id="SM00717">
    <property type="entry name" value="SANT"/>
    <property type="match status" value="2"/>
</dbReference>
<dbReference type="SUPFAM" id="SSF46689">
    <property type="entry name" value="Homeodomain-like"/>
    <property type="match status" value="1"/>
</dbReference>
<dbReference type="PROSITE" id="PS51294">
    <property type="entry name" value="HTH_MYB"/>
    <property type="match status" value="2"/>
</dbReference>
<feature type="chain" id="PRO_0000424711" description="Transcription factor MYB34">
    <location>
        <begin position="1"/>
        <end position="295"/>
    </location>
</feature>
<feature type="domain" description="HTH myb-type 1" evidence="1">
    <location>
        <begin position="9"/>
        <end position="61"/>
    </location>
</feature>
<feature type="domain" description="HTH myb-type 2" evidence="1">
    <location>
        <begin position="62"/>
        <end position="116"/>
    </location>
</feature>
<feature type="DNA-binding region" description="H-T-H motif" evidence="1">
    <location>
        <begin position="37"/>
        <end position="61"/>
    </location>
</feature>
<feature type="DNA-binding region" description="H-T-H motif" evidence="1">
    <location>
        <begin position="89"/>
        <end position="112"/>
    </location>
</feature>
<proteinExistence type="evidence at protein level"/>
<protein>
    <recommendedName>
        <fullName>Transcription factor MYB34</fullName>
    </recommendedName>
    <alternativeName>
        <fullName>Myb-related protein 34</fullName>
        <shortName>AtMYB34</shortName>
    </alternativeName>
    <alternativeName>
        <fullName>Protein ALTERED TRYPTOPHAN REGULATION 1</fullName>
        <shortName>ATR1</shortName>
    </alternativeName>
</protein>
<organism>
    <name type="scientific">Arabidopsis thaliana</name>
    <name type="common">Mouse-ear cress</name>
    <dbReference type="NCBI Taxonomy" id="3702"/>
    <lineage>
        <taxon>Eukaryota</taxon>
        <taxon>Viridiplantae</taxon>
        <taxon>Streptophyta</taxon>
        <taxon>Embryophyta</taxon>
        <taxon>Tracheophyta</taxon>
        <taxon>Spermatophyta</taxon>
        <taxon>Magnoliopsida</taxon>
        <taxon>eudicotyledons</taxon>
        <taxon>Gunneridae</taxon>
        <taxon>Pentapetalae</taxon>
        <taxon>rosids</taxon>
        <taxon>malvids</taxon>
        <taxon>Brassicales</taxon>
        <taxon>Brassicaceae</taxon>
        <taxon>Camelineae</taxon>
        <taxon>Arabidopsis</taxon>
    </lineage>
</organism>
<reference key="1">
    <citation type="journal article" date="1998" name="Proc. Natl. Acad. Sci. U.S.A.">
        <title>A Myb homologue, ATR1, activates tryptophan gene expression in Arabidopsis.</title>
        <authorList>
            <person name="Bender J."/>
            <person name="Fink G.R."/>
        </authorList>
    </citation>
    <scope>NUCLEOTIDE SEQUENCE [GENOMIC DNA]</scope>
    <scope>FUNCTION</scope>
    <source>
        <strain>cv. Columbia</strain>
    </source>
</reference>
<reference key="2">
    <citation type="submission" date="2004-01" db="EMBL/GenBank/DDBJ databases">
        <title>The MYB transcription factor family in Arabidopsis: a genome-wide cloning and expression pattern analysis.</title>
        <authorList>
            <person name="Qu L."/>
            <person name="Gu H."/>
        </authorList>
    </citation>
    <scope>NUCLEOTIDE SEQUENCE [MRNA]</scope>
</reference>
<reference key="3">
    <citation type="journal article" date="1997" name="DNA Res.">
        <title>Structural analysis of Arabidopsis thaliana chromosome 5. III. Sequence features of the regions of 1,191,918 bp covered by seventeen physically assigned P1 clones.</title>
        <authorList>
            <person name="Nakamura Y."/>
            <person name="Sato S."/>
            <person name="Kaneko T."/>
            <person name="Kotani H."/>
            <person name="Asamizu E."/>
            <person name="Miyajima N."/>
            <person name="Tabata S."/>
        </authorList>
    </citation>
    <scope>NUCLEOTIDE SEQUENCE [LARGE SCALE GENOMIC DNA]</scope>
    <source>
        <strain>cv. Columbia</strain>
    </source>
</reference>
<reference key="4">
    <citation type="journal article" date="2017" name="Plant J.">
        <title>Araport11: a complete reannotation of the Arabidopsis thaliana reference genome.</title>
        <authorList>
            <person name="Cheng C.Y."/>
            <person name="Krishnakumar V."/>
            <person name="Chan A.P."/>
            <person name="Thibaud-Nissen F."/>
            <person name="Schobel S."/>
            <person name="Town C.D."/>
        </authorList>
    </citation>
    <scope>GENOME REANNOTATION</scope>
    <source>
        <strain>cv. Columbia</strain>
    </source>
</reference>
<reference key="5">
    <citation type="submission" date="2007-02" db="EMBL/GenBank/DDBJ databases">
        <title>Arabidopsis ORF clones.</title>
        <authorList>
            <person name="Bautista V.R."/>
            <person name="Kim C.J."/>
            <person name="Chen H."/>
            <person name="Wu S.Y."/>
            <person name="De Los Reyes C."/>
            <person name="Ecker J.R."/>
        </authorList>
    </citation>
    <scope>NUCLEOTIDE SEQUENCE [LARGE SCALE MRNA]</scope>
</reference>
<reference key="6">
    <citation type="journal article" date="1998" name="Plant J.">
        <title>Towards functional characterisation of the members of the R2R3-MYB gene family from Arabidopsis thaliana.</title>
        <authorList>
            <person name="Kranz H.D."/>
            <person name="Denekamp M."/>
            <person name="Greco R."/>
            <person name="Jin H.-L."/>
            <person name="Leyva A."/>
            <person name="Meissner R.C."/>
            <person name="Petroni K."/>
            <person name="Urzainqui A."/>
            <person name="Bevan M."/>
            <person name="Martin C."/>
            <person name="Smeekens S."/>
            <person name="Tonelli C."/>
            <person name="Paz-Ares J."/>
            <person name="Weisshaar B."/>
        </authorList>
    </citation>
    <scope>NUCLEOTIDE SEQUENCE [MRNA] OF 76-295</scope>
</reference>
<reference key="7">
    <citation type="journal article" date="2001" name="Curr. Opin. Plant Biol.">
        <title>The R2R3-MYB gene family in Arabidopsis thaliana.</title>
        <authorList>
            <person name="Stracke R."/>
            <person name="Werber M."/>
            <person name="Weisshaar B."/>
        </authorList>
    </citation>
    <scope>GENE FAMILY</scope>
    <scope>NOMENCLATURE</scope>
    <source>
        <strain>cv. Columbia</strain>
    </source>
</reference>
<reference key="8">
    <citation type="journal article" date="2005" name="Plant Physiol.">
        <title>The Arabidopsis ATR1 Myb transcription factor controls indolic glucosinolate homeostasis.</title>
        <authorList>
            <person name="Celenza J.L."/>
            <person name="Quiel J.A."/>
            <person name="Smolen G.A."/>
            <person name="Merrikh H."/>
            <person name="Silvestro A.R."/>
            <person name="Normanly J."/>
            <person name="Bender J."/>
        </authorList>
    </citation>
    <scope>FUNCTION</scope>
    <scope>DISRUPTION PHENOTYPE</scope>
</reference>
<reference key="9">
    <citation type="journal article" date="2012" name="Front. Plant Sci.">
        <title>Glucosinolates are produced in trichomes of Arabidopsis thaliana.</title>
        <authorList>
            <person name="Frerigmann H."/>
            <person name="Boettcher C."/>
            <person name="Baatout D."/>
            <person name="Gigolashvili T."/>
        </authorList>
    </citation>
    <scope>TISSUE SPECIFICITY</scope>
    <source>
        <strain>cv. Columbia</strain>
    </source>
</reference>
<reference key="10">
    <citation type="journal article" date="2013" name="J. Exp. Bot.">
        <title>BZR1 and BES1 participate in regulation of glucosinolate biosynthesis by brassinosteroids in Arabidopsis.</title>
        <authorList>
            <person name="Guo R."/>
            <person name="Qian H."/>
            <person name="Shen W."/>
            <person name="Liu L."/>
            <person name="Zhang M."/>
            <person name="Cai C."/>
            <person name="Zhao Y."/>
            <person name="Qiao J."/>
            <person name="Wang Q."/>
        </authorList>
    </citation>
    <scope>FUNCTION</scope>
    <scope>DISRUPTION PHENOTYPE</scope>
</reference>
<reference key="11">
    <citation type="journal article" date="2013" name="Plant Cell">
        <title>Arabidopsis basic helix-loop-helix transcription factors MYC2, MYC3, and MYC4 regulate glucosinolate biosynthesis, insect performance, and feeding behavior.</title>
        <authorList>
            <person name="Schweizer F."/>
            <person name="Fernandez-Calvo P."/>
            <person name="Zander M."/>
            <person name="Diez-Diaz M."/>
            <person name="Fonseca S."/>
            <person name="Glauser G."/>
            <person name="Lewsey M.G."/>
            <person name="Ecker J.R."/>
            <person name="Solano R."/>
            <person name="Reymond P."/>
        </authorList>
    </citation>
    <scope>FUNCTION</scope>
    <scope>INTERACTION WITH MYC2; MYC3 AND MYC4</scope>
    <scope>INDUCTION BY HERBIVORY</scope>
</reference>
<name>MYB34_ARATH</name>
<comment type="function">
    <text evidence="2 4 5 6">Transcription factor involved in tryptophan gene activation and in indole-3-acetic acid (IAA) and indolic glucosinolates (IG) biosynthesis. Acts as a direct transcriptional activator of both Trp synthesis genes and Trp secondary metabolism genes.</text>
</comment>
<comment type="subunit">
    <text>Can form complexes with MYC2, MYC3 or MYC4.</text>
</comment>
<comment type="interaction">
    <interactant intactId="EBI-25517538">
        <id>O64399</id>
    </interactant>
    <interactant intactId="EBI-25517523">
        <id>A0A1P8BA81</id>
        <label>MTI20.21</label>
    </interactant>
    <organismsDiffer>false</organismsDiffer>
    <experiments>3</experiments>
</comment>
<comment type="subcellular location">
    <subcellularLocation>
        <location evidence="7">Nucleus</location>
    </subcellularLocation>
</comment>
<comment type="tissue specificity">
    <text evidence="3">Expressed in trichomes.</text>
</comment>
<comment type="induction">
    <text evidence="5">Up-regulated by herbivory.</text>
</comment>
<comment type="disruption phenotype">
    <text evidence="2 4">No visible phenotype. Reduced indolic glucosinolate levels in adult leaves and loss of responses to brassinosteroids.</text>
</comment>
<gene>
    <name type="primary">MYB34</name>
    <name type="synonym">ATR1</name>
    <name type="ordered locus">At5g60890</name>
    <name type="ORF">MSL3.10</name>
</gene>
<accession>O64399</accession>
<accession>Q9SBG1</accession>